<evidence type="ECO:0000255" key="1">
    <source>
        <dbReference type="HAMAP-Rule" id="MF_01330"/>
    </source>
</evidence>
<evidence type="ECO:0000305" key="2"/>
<accession>A4QKX4</accession>
<keyword id="KW-0067">ATP-binding</keyword>
<keyword id="KW-0150">Chloroplast</keyword>
<keyword id="KW-0547">Nucleotide-binding</keyword>
<keyword id="KW-0934">Plastid</keyword>
<dbReference type="EMBL" id="AP009372">
    <property type="protein sequence ID" value="BAF50329.1"/>
    <property type="molecule type" value="Genomic_DNA"/>
</dbReference>
<dbReference type="GO" id="GO:0009570">
    <property type="term" value="C:chloroplast stroma"/>
    <property type="evidence" value="ECO:0007669"/>
    <property type="project" value="UniProtKB-SubCell"/>
</dbReference>
<dbReference type="GO" id="GO:0005524">
    <property type="term" value="F:ATP binding"/>
    <property type="evidence" value="ECO:0007669"/>
    <property type="project" value="UniProtKB-KW"/>
</dbReference>
<dbReference type="GO" id="GO:0016887">
    <property type="term" value="F:ATP hydrolysis activity"/>
    <property type="evidence" value="ECO:0007669"/>
    <property type="project" value="InterPro"/>
</dbReference>
<dbReference type="CDD" id="cd19505">
    <property type="entry name" value="RecA-like_Ycf2"/>
    <property type="match status" value="1"/>
</dbReference>
<dbReference type="Gene3D" id="3.40.50.300">
    <property type="entry name" value="P-loop containing nucleotide triphosphate hydrolases"/>
    <property type="match status" value="1"/>
</dbReference>
<dbReference type="HAMAP" id="MF_01330">
    <property type="entry name" value="Ycf2"/>
    <property type="match status" value="1"/>
</dbReference>
<dbReference type="InterPro" id="IPR003593">
    <property type="entry name" value="AAA+_ATPase"/>
</dbReference>
<dbReference type="InterPro" id="IPR003959">
    <property type="entry name" value="ATPase_AAA_core"/>
</dbReference>
<dbReference type="InterPro" id="IPR027417">
    <property type="entry name" value="P-loop_NTPase"/>
</dbReference>
<dbReference type="InterPro" id="IPR008543">
    <property type="entry name" value="Uncharacterised_Ycf2"/>
</dbReference>
<dbReference type="InterPro" id="IPR056777">
    <property type="entry name" value="Ycf2_N"/>
</dbReference>
<dbReference type="PANTHER" id="PTHR33078:SF89">
    <property type="entry name" value="PROTEIN YCF2"/>
    <property type="match status" value="1"/>
</dbReference>
<dbReference type="PANTHER" id="PTHR33078">
    <property type="entry name" value="PROTEIN YCF2-RELATED"/>
    <property type="match status" value="1"/>
</dbReference>
<dbReference type="Pfam" id="PF00004">
    <property type="entry name" value="AAA"/>
    <property type="match status" value="1"/>
</dbReference>
<dbReference type="Pfam" id="PF05695">
    <property type="entry name" value="Ycf2"/>
    <property type="match status" value="1"/>
</dbReference>
<dbReference type="SMART" id="SM00382">
    <property type="entry name" value="AAA"/>
    <property type="match status" value="1"/>
</dbReference>
<dbReference type="SUPFAM" id="SSF52540">
    <property type="entry name" value="P-loop containing nucleoside triphosphate hydrolases"/>
    <property type="match status" value="1"/>
</dbReference>
<proteinExistence type="inferred from homology"/>
<protein>
    <recommendedName>
        <fullName evidence="1">Protein Ycf2 A</fullName>
    </recommendedName>
</protein>
<reference key="1">
    <citation type="submission" date="2007-03" db="EMBL/GenBank/DDBJ databases">
        <title>Sequencing analysis of Crucihimalaya wallichii chloroplast DNA.</title>
        <authorList>
            <person name="Hosouchi T."/>
            <person name="Tsuruoka H."/>
            <person name="Kotani H."/>
        </authorList>
    </citation>
    <scope>NUCLEOTIDE SEQUENCE [LARGE SCALE GENOMIC DNA]</scope>
</reference>
<sequence length="2293" mass="269302">MKGHQFKSWIFELREIVREIKNSHYFLDSWTQFNSVGSFIHIFFHQERFRKLLDPRIFSILLLRNSQGSTSNRYFTIKGVGLFVVAALLYRINNRNMVESKNLYLKGLLPIPMNSIGPRNDTSEESFGSSNINRLIVSLLYLTKGKKISESCFRDPKESTWVLPITQKCIMPESNWSSRWWRNWIGKKRDFCCKISNETVAGIDISFKDKEKDIKYLEFLFVYYMDDPIRKGHDWELFDRLSPSKRRNIINLNSGQLFEILVKDWICYLMFAFREKIPIEVEGFFKQQGAGSTIQSNDIEHVSHLFSRNKWAISLQNCAQFHMWQFHQDLFVSWGKNPHESDFLRKISRENWIWLDNVWLVNKDRFFSKVRNVSSNIQYDSTRSSFVQVTDSSQLNGSSDQFIDPFDSISNEDSEYHYHTLFNQREIQQLKERSILLDPSFIQTEGREIESDRFPKYLSGYSSMPRLFTEREKRMNNHLLPEESEEFLGNPTRAIRSFFSDRWSELHLGSNPTERSTRDQKLLKKEQDVSFVPSRRSENKEIVNIFKIITYLQNTVSIHPISSDLGCDMVPKDELDMDSSNKISFLNKNPFFDLFHLFHERKRGGYTLRHESEERFQEMADLFTLSITEPDLVYHKGFAFSIDSYGLDQRQFLKEVFNSRDESKKKSLLVLPPIFYEENESFYRRIRKNWVRISCGNYLEDPKRVVFASNNIMEAVNQYRLIRNLIQIQFQYSPYGYIRNVLNRFFLMKRPDRNFEYGIQRDLIGNDTLNHSTIMKDTINQHLSNLKKSQKKWFDPLIFLSQTERSINRDPNAYRYKWSNGSKNFQEHLEHFVSERKSRFQVVFDQLCINQYSIDWSEVIDKKDLSKSLRFFLSKLLRFFLSKLLLFLSKLLLFLSNSLPFFFVSFENIPIHRSEIHIYELKGPNDQLCNQLLESIGLQIVHLKKLKPFLLDDHNTSQKSKFLINGGTISPFLFNKIPKWMIDSFHTRKNRRKSFDNTDSYFSIVSHDQDNWLNPVKPFQRSSLISSFSKANRLRFLNNPHHFCFYCNKRFPFYVEKTRLKNSDFTYGQFLTILFIHNKIFSSCGGKKKHAFLERDTISPSSIESQVSNIFISNDFPQSGDERYNLYKSFHFPIRSDPLVRRAIYSIADISGTPLIEGQRVNFERTYCQTLSDMNLSDSEEKSLHQYLNFNSNMGLIHTPCSEKYLQRKKRSLCLKKCVDKGQMDRTFQRDSAFSTLSKWNLFQTYMPWFFTSTGYKYLNLIFLDTFSDLLRILSSSQKFVSIFHDIMHGLDISWRILQKKLCLPQRNLISEISSKSLHNLLLSEEMIHRNNESSLISTHLRSPNVREVLYSILFLLLVAGYIVRTHLLFVSRAYSELQTEFEKIKSLMIPSYMIELRKLLDRYPTSELNSFWLKNLFLVALEQLGDCLEEIRGSGGNMLWGGDPAYGVKSIRSKKKDLKINFIDIIDLISIIPNPINRITFSRNTRHLSHTSKKIYSVIRKRKNVSGDWIDDKIESWVANSDSIDDKEREFLVQFSTLRAEKRIDQILLSLTHSDHLSKNDSGYQMIEQPGTIYLRYLVDIHKKYLMNYEFNTSCLAERRIFLAHYQTITYSQTSCGANSFHFPSHGKPFSLRLALSPSRSILVIGSIGTGRSYLVKYLATNSYVPFITVFLNKFLDNKPKGFFIDDIDIDDSDDIDASNDIHRELDTELELLTMMNALTMDMMSEIDRFYITLQFELAKAMSPCIIWIPNIHDLDVNESSYLALGLLVNSLSRDCERCSTRNILVIASTHIPQKVDPALIAPNKLNTCIKIRRLLIPQQRKHFFTLSYTRGFHLEKKMFHTNGFESITMGSSARDLVALTNEALSISITQKKSIIDTNTIRSALHRQTWDLRSQVRSVQDHGILFYQIGRAVAQNVLISNCPIDPISIYMKKKSCNEGDSYLYKWYFELGTSMKKFTILLYLLSCSAGSVAQDLWSLPGPDEKNRITSYGFIENDSDLVHGLLEVQGALVGSSRTEKDCSQFDNDRVTLLFRSEPRDPLYMMQDGSCSIVDQRFLYEKYESGFEEGEGEGVLDPQQIEEDLFNHIVWAPRIWRPRGFLFDCIERPNELGFPYLAGSFRGKRIIYDEKYELQENDSEFLQSGTMQYQRRDRSSKEQGFFRISQFIWDPADPLFLLFKDQPFVSVFSHREFFADEEMSKGLLTSQTDPPTSIYKRWFIKNTQEKHFELLIQRQRWLRTNSSLSNGFFRSNTRSESYQYLSNLFLSNGTLLDRMTKTLLKKRWLFSDEMKIGFM</sequence>
<name>YCF2A_CRUWA</name>
<organism>
    <name type="scientific">Crucihimalaya wallichii</name>
    <name type="common">Rock-cress</name>
    <name type="synonym">Arabidopsis campestris</name>
    <dbReference type="NCBI Taxonomy" id="78192"/>
    <lineage>
        <taxon>Eukaryota</taxon>
        <taxon>Viridiplantae</taxon>
        <taxon>Streptophyta</taxon>
        <taxon>Embryophyta</taxon>
        <taxon>Tracheophyta</taxon>
        <taxon>Spermatophyta</taxon>
        <taxon>Magnoliopsida</taxon>
        <taxon>eudicotyledons</taxon>
        <taxon>Gunneridae</taxon>
        <taxon>Pentapetalae</taxon>
        <taxon>rosids</taxon>
        <taxon>malvids</taxon>
        <taxon>Brassicales</taxon>
        <taxon>Brassicaceae</taxon>
        <taxon>Crucihimalayeae</taxon>
        <taxon>Crucihimalaya</taxon>
    </lineage>
</organism>
<gene>
    <name evidence="1" type="primary">ycf2-A</name>
</gene>
<geneLocation type="chloroplast"/>
<feature type="chain" id="PRO_0000343765" description="Protein Ycf2 A">
    <location>
        <begin position="1"/>
        <end position="2293"/>
    </location>
</feature>
<feature type="binding site" evidence="1">
    <location>
        <begin position="1647"/>
        <end position="1654"/>
    </location>
    <ligand>
        <name>ATP</name>
        <dbReference type="ChEBI" id="CHEBI:30616"/>
    </ligand>
</feature>
<comment type="function">
    <text evidence="1">Probable ATPase of unknown function. Its presence in a non-photosynthetic plant (Epifagus virginiana) and experiments in tobacco indicate that it has an essential function which is probably not related to photosynthesis.</text>
</comment>
<comment type="subcellular location">
    <subcellularLocation>
        <location evidence="1">Plastid</location>
        <location evidence="1">Chloroplast stroma</location>
    </subcellularLocation>
</comment>
<comment type="similarity">
    <text evidence="1">Belongs to the Ycf2 family.</text>
</comment>
<comment type="caution">
    <text evidence="2">There is 1 gene for this protein in each of the chloroplast inverted repeats; while they are usually identical, in this organism they are not. The other copy is AC A4QKZ7.</text>
</comment>